<comment type="function">
    <text evidence="1">Activator of KIF1B plus-end-directed microtubule motor activity. Required for organization of axonal microtubules, and axonal outgrowth and maintenance during peripheral and central nervous system development.</text>
</comment>
<comment type="subcellular location">
    <subcellularLocation>
        <location evidence="1">Cytoplasm</location>
        <location evidence="1">Cytoskeleton</location>
    </subcellularLocation>
</comment>
<comment type="similarity">
    <text evidence="3">Belongs to the KIF-binding protein family.</text>
</comment>
<comment type="sequence caution" evidence="3">
    <conflict type="erroneous gene model prediction">
        <sequence resource="EMBL-CDS" id="EAL66317"/>
    </conflict>
</comment>
<feature type="chain" id="PRO_0000334521" description="KIF-binding protein">
    <location>
        <begin position="1"/>
        <end position="620"/>
    </location>
</feature>
<feature type="coiled-coil region" evidence="2">
    <location>
        <begin position="30"/>
        <end position="64"/>
    </location>
</feature>
<feature type="coiled-coil region" evidence="2">
    <location>
        <begin position="133"/>
        <end position="169"/>
    </location>
</feature>
<protein>
    <recommendedName>
        <fullName>KIF-binding protein</fullName>
    </recommendedName>
    <alternativeName>
        <fullName>Protein KBP</fullName>
    </alternativeName>
</protein>
<reference key="1">
    <citation type="journal article" date="2005" name="Nature">
        <title>The genome of the social amoeba Dictyostelium discoideum.</title>
        <authorList>
            <person name="Eichinger L."/>
            <person name="Pachebat J.A."/>
            <person name="Gloeckner G."/>
            <person name="Rajandream M.A."/>
            <person name="Sucgang R."/>
            <person name="Berriman M."/>
            <person name="Song J."/>
            <person name="Olsen R."/>
            <person name="Szafranski K."/>
            <person name="Xu Q."/>
            <person name="Tunggal B."/>
            <person name="Kummerfeld S."/>
            <person name="Madera M."/>
            <person name="Konfortov B.A."/>
            <person name="Rivero F."/>
            <person name="Bankier A.T."/>
            <person name="Lehmann R."/>
            <person name="Hamlin N."/>
            <person name="Davies R."/>
            <person name="Gaudet P."/>
            <person name="Fey P."/>
            <person name="Pilcher K."/>
            <person name="Chen G."/>
            <person name="Saunders D."/>
            <person name="Sodergren E.J."/>
            <person name="Davis P."/>
            <person name="Kerhornou A."/>
            <person name="Nie X."/>
            <person name="Hall N."/>
            <person name="Anjard C."/>
            <person name="Hemphill L."/>
            <person name="Bason N."/>
            <person name="Farbrother P."/>
            <person name="Desany B."/>
            <person name="Just E."/>
            <person name="Morio T."/>
            <person name="Rost R."/>
            <person name="Churcher C.M."/>
            <person name="Cooper J."/>
            <person name="Haydock S."/>
            <person name="van Driessche N."/>
            <person name="Cronin A."/>
            <person name="Goodhead I."/>
            <person name="Muzny D.M."/>
            <person name="Mourier T."/>
            <person name="Pain A."/>
            <person name="Lu M."/>
            <person name="Harper D."/>
            <person name="Lindsay R."/>
            <person name="Hauser H."/>
            <person name="James K.D."/>
            <person name="Quiles M."/>
            <person name="Madan Babu M."/>
            <person name="Saito T."/>
            <person name="Buchrieser C."/>
            <person name="Wardroper A."/>
            <person name="Felder M."/>
            <person name="Thangavelu M."/>
            <person name="Johnson D."/>
            <person name="Knights A."/>
            <person name="Loulseged H."/>
            <person name="Mungall K.L."/>
            <person name="Oliver K."/>
            <person name="Price C."/>
            <person name="Quail M.A."/>
            <person name="Urushihara H."/>
            <person name="Hernandez J."/>
            <person name="Rabbinowitsch E."/>
            <person name="Steffen D."/>
            <person name="Sanders M."/>
            <person name="Ma J."/>
            <person name="Kohara Y."/>
            <person name="Sharp S."/>
            <person name="Simmonds M.N."/>
            <person name="Spiegler S."/>
            <person name="Tivey A."/>
            <person name="Sugano S."/>
            <person name="White B."/>
            <person name="Walker D."/>
            <person name="Woodward J.R."/>
            <person name="Winckler T."/>
            <person name="Tanaka Y."/>
            <person name="Shaulsky G."/>
            <person name="Schleicher M."/>
            <person name="Weinstock G.M."/>
            <person name="Rosenthal A."/>
            <person name="Cox E.C."/>
            <person name="Chisholm R.L."/>
            <person name="Gibbs R.A."/>
            <person name="Loomis W.F."/>
            <person name="Platzer M."/>
            <person name="Kay R.R."/>
            <person name="Williams J.G."/>
            <person name="Dear P.H."/>
            <person name="Noegel A.A."/>
            <person name="Barrell B.G."/>
            <person name="Kuspa A."/>
        </authorList>
    </citation>
    <scope>NUCLEOTIDE SEQUENCE [LARGE SCALE GENOMIC DNA]</scope>
    <source>
        <strain>AX4</strain>
    </source>
</reference>
<proteinExistence type="inferred from homology"/>
<dbReference type="EMBL" id="AAFI02000046">
    <property type="protein sequence ID" value="EAL66317.1"/>
    <property type="status" value="ALT_SEQ"/>
    <property type="molecule type" value="Genomic_DNA"/>
</dbReference>
<dbReference type="RefSeq" id="XP_640294.1">
    <property type="nucleotide sequence ID" value="XM_635202.1"/>
</dbReference>
<dbReference type="SMR" id="Q54SU1"/>
<dbReference type="FunCoup" id="Q54SU1">
    <property type="interactions" value="210"/>
</dbReference>
<dbReference type="PaxDb" id="44689-DDB0205275"/>
<dbReference type="EnsemblProtists" id="EAL66317">
    <property type="protein sequence ID" value="EAL66317"/>
    <property type="gene ID" value="DDB_G0282223"/>
</dbReference>
<dbReference type="GeneID" id="8623470"/>
<dbReference type="KEGG" id="ddi:DDB_G0282223"/>
<dbReference type="dictyBase" id="DDB_G0282223"/>
<dbReference type="VEuPathDB" id="AmoebaDB:DDB_G0282223"/>
<dbReference type="eggNOG" id="ENOG502QPZT">
    <property type="taxonomic scope" value="Eukaryota"/>
</dbReference>
<dbReference type="InParanoid" id="Q54SU1"/>
<dbReference type="PRO" id="PR:Q54SU1"/>
<dbReference type="Proteomes" id="UP000002195">
    <property type="component" value="Chromosome 3"/>
</dbReference>
<dbReference type="GO" id="GO:0005856">
    <property type="term" value="C:cytoskeleton"/>
    <property type="evidence" value="ECO:0007669"/>
    <property type="project" value="UniProtKB-SubCell"/>
</dbReference>
<dbReference type="GO" id="GO:0005739">
    <property type="term" value="C:mitochondrion"/>
    <property type="evidence" value="ECO:0000250"/>
    <property type="project" value="UniProtKB"/>
</dbReference>
<dbReference type="GO" id="GO:0047497">
    <property type="term" value="P:mitochondrion transport along microtubule"/>
    <property type="evidence" value="ECO:0000250"/>
    <property type="project" value="UniProtKB"/>
</dbReference>
<dbReference type="InterPro" id="IPR022083">
    <property type="entry name" value="KBP"/>
</dbReference>
<dbReference type="PANTHER" id="PTHR46321:SF1">
    <property type="entry name" value="KIF-BINDING PROTEIN"/>
    <property type="match status" value="1"/>
</dbReference>
<dbReference type="PANTHER" id="PTHR46321">
    <property type="entry name" value="KIF1-BINDING PROTEIN"/>
    <property type="match status" value="1"/>
</dbReference>
<dbReference type="Pfam" id="PF12309">
    <property type="entry name" value="KBP_C"/>
    <property type="match status" value="1"/>
</dbReference>
<accession>Q54SU1</accession>
<organism>
    <name type="scientific">Dictyostelium discoideum</name>
    <name type="common">Social amoeba</name>
    <dbReference type="NCBI Taxonomy" id="44689"/>
    <lineage>
        <taxon>Eukaryota</taxon>
        <taxon>Amoebozoa</taxon>
        <taxon>Evosea</taxon>
        <taxon>Eumycetozoa</taxon>
        <taxon>Dictyostelia</taxon>
        <taxon>Dictyosteliales</taxon>
        <taxon>Dictyosteliaceae</taxon>
        <taxon>Dictyostelium</taxon>
    </lineage>
</organism>
<gene>
    <name type="primary">kifbp</name>
    <name type="synonym">kbp</name>
    <name type="ORF">DDB_G0282223</name>
</gene>
<evidence type="ECO:0000250" key="1">
    <source>
        <dbReference type="UniProtKB" id="Q96EK5"/>
    </source>
</evidence>
<evidence type="ECO:0000255" key="2"/>
<evidence type="ECO:0000305" key="3"/>
<name>KBP_DICDI</name>
<sequence length="620" mass="73101">MTMITIDYIKDIIKRSDKLSEEIDPDQTPYKSKYEAIELLVKELKKEINENEKELNQQQQQDILDYLVVIDSKLGELFIATEEITLGLNICRDCLKSLESIKNKFPLETISTFQSIAIIDINKNHFENGKQLLIKSENLINQTIEKQQEQEQEQEQQFKDKLESLQLQNYFYFAQLYGLLKDSELSSKYCELTLRKQLKRNNFDRLEWCKNSLMLAEYYLSELNFDYAKQCFLVSNYICKGIENEDDREETQANIYLVMAKFYLEFLHFFRDIENLNHCHRVNNNNKNNNNENDIDFVQGGLSSISLSDKQKEKEKEDKLFNENQIKKEKMLDLISFNKRSLNIDKPLFTELGSELLDKIYNHSTFTSPIDLIVVKDQPSARDIFLKSQHFFNKSKKYYKLDGFVSQHIKILFDQINLFEYLNMFESNAGRKIGIHKKKIELIQPLLKELNPTYFLSSIRSIYFKIAEIYSEISKIYQCVCTNLREIQTYNECLFKSMEYYNLFLNSYNDGEVPNSPKITEEEKMKSIIEDFEVYINAKLELAVCHKNVKGVNKLVLEHLEKSLNLFRSIITLLDSVPKDISSRHTQEYHLCSQMSSLLPQKIQFLSSNKTPNPGQWYGK</sequence>
<keyword id="KW-0175">Coiled coil</keyword>
<keyword id="KW-0963">Cytoplasm</keyword>
<keyword id="KW-0206">Cytoskeleton</keyword>
<keyword id="KW-1185">Reference proteome</keyword>